<comment type="function">
    <text evidence="2 6">Transcriptional regulator; binds and activates the promoter for the HNF1-alpha gene (PubMed:8808405). Potential initiator of a transcriptional cascade within a subset of cells committed to a specific developmental program (PubMed:8808405). Could be a determinant for asymmetry in early development (PubMed:8808405). May play a role in the regulation of the circadian clock (By similarity).</text>
</comment>
<comment type="subunit">
    <text evidence="2">Homodimerization is required for HNF4-alpha to bind to its recognition site.</text>
</comment>
<comment type="subcellular location">
    <subcellularLocation>
        <location>Nucleus</location>
    </subcellularLocation>
</comment>
<comment type="tissue specificity">
    <text>Expressed in liver and kidney.</text>
</comment>
<comment type="developmental stage">
    <text>Maternal protein which is distributed within an animal-to-vegetal gradient in the embryo. Present throughout the entire development.</text>
</comment>
<comment type="domain">
    <text evidence="2">The 9aaTAD motif is a transactivation domain present in a large number of yeast and animal transcription factors.</text>
</comment>
<comment type="miscellaneous">
    <text evidence="1">Binds fatty acids.</text>
</comment>
<comment type="similarity">
    <text evidence="7">Belongs to the nuclear hormone receptor family. NR2 subfamily.</text>
</comment>
<comment type="sequence caution" evidence="7">
    <conflict type="erroneous initiation">
        <sequence resource="EMBL-CDS" id="CAA85763"/>
    </conflict>
</comment>
<accession>Q91766</accession>
<accession>Q8AVK3</accession>
<dbReference type="EMBL" id="Z37526">
    <property type="protein sequence ID" value="CAA85763.1"/>
    <property type="status" value="ALT_INIT"/>
    <property type="molecule type" value="mRNA"/>
</dbReference>
<dbReference type="EMBL" id="BC042224">
    <property type="protein sequence ID" value="AAH42224.1"/>
    <property type="molecule type" value="mRNA"/>
</dbReference>
<dbReference type="RefSeq" id="NP_001080070.1">
    <property type="nucleotide sequence ID" value="NM_001086601.1"/>
</dbReference>
<dbReference type="SMR" id="Q91766"/>
<dbReference type="DNASU" id="379762"/>
<dbReference type="GeneID" id="379762"/>
<dbReference type="KEGG" id="xla:379762"/>
<dbReference type="AGR" id="Xenbase:XB-GENE-864872"/>
<dbReference type="CTD" id="379762"/>
<dbReference type="Xenbase" id="XB-GENE-864872">
    <property type="gene designation" value="hnf4a.S"/>
</dbReference>
<dbReference type="OrthoDB" id="5771769at2759"/>
<dbReference type="Proteomes" id="UP000186698">
    <property type="component" value="Chromosome 9_10S"/>
</dbReference>
<dbReference type="Bgee" id="379762">
    <property type="expression patterns" value="Expressed in intestine and 6 other cell types or tissues"/>
</dbReference>
<dbReference type="GO" id="GO:0005634">
    <property type="term" value="C:nucleus"/>
    <property type="evidence" value="ECO:0007669"/>
    <property type="project" value="UniProtKB-SubCell"/>
</dbReference>
<dbReference type="GO" id="GO:0004879">
    <property type="term" value="F:nuclear receptor activity"/>
    <property type="evidence" value="ECO:0000318"/>
    <property type="project" value="GO_Central"/>
</dbReference>
<dbReference type="GO" id="GO:0003707">
    <property type="term" value="F:nuclear steroid receptor activity"/>
    <property type="evidence" value="ECO:0007669"/>
    <property type="project" value="InterPro"/>
</dbReference>
<dbReference type="GO" id="GO:0000978">
    <property type="term" value="F:RNA polymerase II cis-regulatory region sequence-specific DNA binding"/>
    <property type="evidence" value="ECO:0000318"/>
    <property type="project" value="GO_Central"/>
</dbReference>
<dbReference type="GO" id="GO:0008270">
    <property type="term" value="F:zinc ion binding"/>
    <property type="evidence" value="ECO:0007669"/>
    <property type="project" value="UniProtKB-KW"/>
</dbReference>
<dbReference type="GO" id="GO:0030154">
    <property type="term" value="P:cell differentiation"/>
    <property type="evidence" value="ECO:0000318"/>
    <property type="project" value="GO_Central"/>
</dbReference>
<dbReference type="GO" id="GO:0045893">
    <property type="term" value="P:positive regulation of DNA-templated transcription"/>
    <property type="evidence" value="ECO:0000250"/>
    <property type="project" value="UniProtKB"/>
</dbReference>
<dbReference type="GO" id="GO:0045944">
    <property type="term" value="P:positive regulation of transcription by RNA polymerase II"/>
    <property type="evidence" value="ECO:0000318"/>
    <property type="project" value="GO_Central"/>
</dbReference>
<dbReference type="GO" id="GO:0042752">
    <property type="term" value="P:regulation of circadian rhythm"/>
    <property type="evidence" value="ECO:0000250"/>
    <property type="project" value="UniProtKB"/>
</dbReference>
<dbReference type="GO" id="GO:0048511">
    <property type="term" value="P:rhythmic process"/>
    <property type="evidence" value="ECO:0007669"/>
    <property type="project" value="UniProtKB-KW"/>
</dbReference>
<dbReference type="CDD" id="cd06960">
    <property type="entry name" value="NR_DBD_HNF4A"/>
    <property type="match status" value="1"/>
</dbReference>
<dbReference type="CDD" id="cd06931">
    <property type="entry name" value="NR_LBD_HNF4_like"/>
    <property type="match status" value="1"/>
</dbReference>
<dbReference type="FunFam" id="1.10.565.10:FF:000007">
    <property type="entry name" value="Hepatocyte nuclear factor 4 alpha"/>
    <property type="match status" value="1"/>
</dbReference>
<dbReference type="FunFam" id="3.30.50.10:FF:000012">
    <property type="entry name" value="Hepatocyte nuclear factor 4, alpha"/>
    <property type="match status" value="1"/>
</dbReference>
<dbReference type="Gene3D" id="3.30.50.10">
    <property type="entry name" value="Erythroid Transcription Factor GATA-1, subunit A"/>
    <property type="match status" value="1"/>
</dbReference>
<dbReference type="Gene3D" id="1.10.565.10">
    <property type="entry name" value="Retinoid X Receptor"/>
    <property type="match status" value="1"/>
</dbReference>
<dbReference type="InterPro" id="IPR049636">
    <property type="entry name" value="HNF4-like_DBD"/>
</dbReference>
<dbReference type="InterPro" id="IPR049635">
    <property type="entry name" value="HNF4_LBD"/>
</dbReference>
<dbReference type="InterPro" id="IPR035500">
    <property type="entry name" value="NHR-like_dom_sf"/>
</dbReference>
<dbReference type="InterPro" id="IPR000536">
    <property type="entry name" value="Nucl_hrmn_rcpt_lig-bd"/>
</dbReference>
<dbReference type="InterPro" id="IPR050274">
    <property type="entry name" value="Nuclear_hormone_rcpt_NR2"/>
</dbReference>
<dbReference type="InterPro" id="IPR001723">
    <property type="entry name" value="Nuclear_hrmn_rcpt"/>
</dbReference>
<dbReference type="InterPro" id="IPR000003">
    <property type="entry name" value="Retinoid-X_rcpt/HNF4"/>
</dbReference>
<dbReference type="InterPro" id="IPR001628">
    <property type="entry name" value="Znf_hrmn_rcpt"/>
</dbReference>
<dbReference type="InterPro" id="IPR013088">
    <property type="entry name" value="Znf_NHR/GATA"/>
</dbReference>
<dbReference type="PANTHER" id="PTHR24083">
    <property type="entry name" value="NUCLEAR HORMONE RECEPTOR"/>
    <property type="match status" value="1"/>
</dbReference>
<dbReference type="Pfam" id="PF00104">
    <property type="entry name" value="Hormone_recep"/>
    <property type="match status" value="1"/>
</dbReference>
<dbReference type="Pfam" id="PF00105">
    <property type="entry name" value="zf-C4"/>
    <property type="match status" value="1"/>
</dbReference>
<dbReference type="PRINTS" id="PR00545">
    <property type="entry name" value="RETINOIDXR"/>
</dbReference>
<dbReference type="PRINTS" id="PR00398">
    <property type="entry name" value="STRDHORMONER"/>
</dbReference>
<dbReference type="PRINTS" id="PR00047">
    <property type="entry name" value="STROIDFINGER"/>
</dbReference>
<dbReference type="SMART" id="SM00430">
    <property type="entry name" value="HOLI"/>
    <property type="match status" value="1"/>
</dbReference>
<dbReference type="SMART" id="SM00399">
    <property type="entry name" value="ZnF_C4"/>
    <property type="match status" value="1"/>
</dbReference>
<dbReference type="SUPFAM" id="SSF57716">
    <property type="entry name" value="Glucocorticoid receptor-like (DNA-binding domain)"/>
    <property type="match status" value="1"/>
</dbReference>
<dbReference type="SUPFAM" id="SSF48508">
    <property type="entry name" value="Nuclear receptor ligand-binding domain"/>
    <property type="match status" value="1"/>
</dbReference>
<dbReference type="PROSITE" id="PS51843">
    <property type="entry name" value="NR_LBD"/>
    <property type="match status" value="1"/>
</dbReference>
<dbReference type="PROSITE" id="PS00031">
    <property type="entry name" value="NUCLEAR_REC_DBD_1"/>
    <property type="match status" value="1"/>
</dbReference>
<dbReference type="PROSITE" id="PS51030">
    <property type="entry name" value="NUCLEAR_REC_DBD_2"/>
    <property type="match status" value="1"/>
</dbReference>
<gene>
    <name type="primary">hnf4a</name>
    <name type="synonym">hnf4</name>
    <name type="synonym">nr2a1</name>
</gene>
<keyword id="KW-0010">Activator</keyword>
<keyword id="KW-0090">Biological rhythms</keyword>
<keyword id="KW-0238">DNA-binding</keyword>
<keyword id="KW-0479">Metal-binding</keyword>
<keyword id="KW-0539">Nucleus</keyword>
<keyword id="KW-0675">Receptor</keyword>
<keyword id="KW-1185">Reference proteome</keyword>
<keyword id="KW-0678">Repressor</keyword>
<keyword id="KW-0804">Transcription</keyword>
<keyword id="KW-0805">Transcription regulation</keyword>
<keyword id="KW-0862">Zinc</keyword>
<keyword id="KW-0863">Zinc-finger</keyword>
<name>HNF4A_XENLA</name>
<sequence>MRLSKALIDMDMADYTEALDPAYTTLEFENMQVLSIGTDTSTSDVTSLSASNSIGINSLCAICGDRATGKHYGASSCDGCKGFFRRSVRKNHMYSCRFSRQCVVDKDKRNQCRYCRLKKCFRAGMKKEAVQNERDRISTRRSSYEDSSLPSINVLIQAEVLSQQITSSVGVLNTDIRGKKIACIIDVCDSMKQQLLVLVEWAKYIPAFCELPLDDQVALLRAHAGEHLLLGATKRSMMFKDILLLGNDRLIPRNCPELEVGRVAVRILDELVLPFQELQIDDNEYACLKAIIFFDPDAKGLSDPTKIKRMRYQVQVSLEDYINDRQYDSRGRFGELLLLLPTLQSITWQMIEQIQFVKLFGMAKIDNLLQEMLLGGSANEASHTHHHLHPHLVQDHLATNVIVANNTLPSQLHNGQMSTPETPQPSPPAGSGAEQYKIVHGTIASINKQPTSIPQSTITKQEAM</sequence>
<organism>
    <name type="scientific">Xenopus laevis</name>
    <name type="common">African clawed frog</name>
    <dbReference type="NCBI Taxonomy" id="8355"/>
    <lineage>
        <taxon>Eukaryota</taxon>
        <taxon>Metazoa</taxon>
        <taxon>Chordata</taxon>
        <taxon>Craniata</taxon>
        <taxon>Vertebrata</taxon>
        <taxon>Euteleostomi</taxon>
        <taxon>Amphibia</taxon>
        <taxon>Batrachia</taxon>
        <taxon>Anura</taxon>
        <taxon>Pipoidea</taxon>
        <taxon>Pipidae</taxon>
        <taxon>Xenopodinae</taxon>
        <taxon>Xenopus</taxon>
        <taxon>Xenopus</taxon>
    </lineage>
</organism>
<proteinExistence type="evidence at transcript level"/>
<protein>
    <recommendedName>
        <fullName>Hepatocyte nuclear factor 4-alpha</fullName>
        <shortName>HNF-4-alpha</shortName>
    </recommendedName>
    <alternativeName>
        <fullName>Nuclear receptor subfamily 2 group A member 1</fullName>
    </alternativeName>
</protein>
<evidence type="ECO:0000250" key="1"/>
<evidence type="ECO:0000250" key="2">
    <source>
        <dbReference type="UniProtKB" id="P41235"/>
    </source>
</evidence>
<evidence type="ECO:0000255" key="3">
    <source>
        <dbReference type="PROSITE-ProRule" id="PRU00407"/>
    </source>
</evidence>
<evidence type="ECO:0000255" key="4">
    <source>
        <dbReference type="PROSITE-ProRule" id="PRU01189"/>
    </source>
</evidence>
<evidence type="ECO:0000256" key="5">
    <source>
        <dbReference type="SAM" id="MobiDB-lite"/>
    </source>
</evidence>
<evidence type="ECO:0000269" key="6">
    <source>
    </source>
</evidence>
<evidence type="ECO:0000305" key="7"/>
<reference key="1">
    <citation type="journal article" date="1996" name="Mech. Dev.">
        <title>Transcriptional hierarchy in Xenopus embryogenesis: HNF4 a maternal factor involved in the developmental activation of the gene encoding the tissue specific transcription factor HNF1 alpha (LFB1).</title>
        <authorList>
            <person name="Holewa B."/>
            <person name="Pogge von Strandmann E."/>
            <person name="Zapp D."/>
            <person name="Lorenz P."/>
            <person name="Ryffel G.U."/>
        </authorList>
    </citation>
    <scope>NUCLEOTIDE SEQUENCE [MRNA]</scope>
    <scope>FUNCTION</scope>
    <source>
        <tissue>Liver</tissue>
    </source>
</reference>
<reference key="2">
    <citation type="submission" date="2003-01" db="EMBL/GenBank/DDBJ databases">
        <authorList>
            <consortium name="NIH - Xenopus Gene Collection (XGC) project"/>
        </authorList>
    </citation>
    <scope>NUCLEOTIDE SEQUENCE [LARGE SCALE MRNA]</scope>
    <source>
        <tissue>Embryo</tissue>
    </source>
</reference>
<feature type="chain" id="PRO_0000053561" description="Hepatocyte nuclear factor 4-alpha">
    <location>
        <begin position="1"/>
        <end position="464"/>
    </location>
</feature>
<feature type="domain" description="NR LBD" evidence="4">
    <location>
        <begin position="147"/>
        <end position="376"/>
    </location>
</feature>
<feature type="DNA-binding region" description="Nuclear receptor" evidence="3">
    <location>
        <begin position="57"/>
        <end position="132"/>
    </location>
</feature>
<feature type="zinc finger region" description="NR C4-type" evidence="3">
    <location>
        <begin position="60"/>
        <end position="80"/>
    </location>
</feature>
<feature type="zinc finger region" description="NR C4-type" evidence="3">
    <location>
        <begin position="96"/>
        <end position="120"/>
    </location>
</feature>
<feature type="region of interest" description="Disordered" evidence="5">
    <location>
        <begin position="410"/>
        <end position="433"/>
    </location>
</feature>
<feature type="short sequence motif" description="9aaTAD" evidence="2">
    <location>
        <begin position="367"/>
        <end position="375"/>
    </location>
</feature>
<feature type="compositionally biased region" description="Polar residues" evidence="5">
    <location>
        <begin position="410"/>
        <end position="421"/>
    </location>
</feature>
<feature type="sequence conflict" description="In Ref. 2; AAH42224." evidence="7" ref="2">
    <original>E</original>
    <variation>D</variation>
    <location>
        <position position="335"/>
    </location>
</feature>